<dbReference type="EMBL" id="CP000108">
    <property type="protein sequence ID" value="ABB29100.1"/>
    <property type="molecule type" value="Genomic_DNA"/>
</dbReference>
<dbReference type="SMR" id="Q3APH5"/>
<dbReference type="STRING" id="340177.Cag_1849"/>
<dbReference type="KEGG" id="cch:Cag_1849"/>
<dbReference type="eggNOG" id="COG0089">
    <property type="taxonomic scope" value="Bacteria"/>
</dbReference>
<dbReference type="HOGENOM" id="CLU_037562_3_0_10"/>
<dbReference type="OrthoDB" id="9797862at2"/>
<dbReference type="GO" id="GO:1990904">
    <property type="term" value="C:ribonucleoprotein complex"/>
    <property type="evidence" value="ECO:0007669"/>
    <property type="project" value="UniProtKB-KW"/>
</dbReference>
<dbReference type="GO" id="GO:0005840">
    <property type="term" value="C:ribosome"/>
    <property type="evidence" value="ECO:0007669"/>
    <property type="project" value="UniProtKB-KW"/>
</dbReference>
<dbReference type="GO" id="GO:0019843">
    <property type="term" value="F:rRNA binding"/>
    <property type="evidence" value="ECO:0007669"/>
    <property type="project" value="UniProtKB-UniRule"/>
</dbReference>
<dbReference type="GO" id="GO:0003735">
    <property type="term" value="F:structural constituent of ribosome"/>
    <property type="evidence" value="ECO:0007669"/>
    <property type="project" value="InterPro"/>
</dbReference>
<dbReference type="GO" id="GO:0006412">
    <property type="term" value="P:translation"/>
    <property type="evidence" value="ECO:0007669"/>
    <property type="project" value="UniProtKB-UniRule"/>
</dbReference>
<dbReference type="Gene3D" id="3.30.70.330">
    <property type="match status" value="1"/>
</dbReference>
<dbReference type="HAMAP" id="MF_01369_B">
    <property type="entry name" value="Ribosomal_uL23_B"/>
    <property type="match status" value="1"/>
</dbReference>
<dbReference type="InterPro" id="IPR012677">
    <property type="entry name" value="Nucleotide-bd_a/b_plait_sf"/>
</dbReference>
<dbReference type="InterPro" id="IPR013025">
    <property type="entry name" value="Ribosomal_uL23-like"/>
</dbReference>
<dbReference type="InterPro" id="IPR012678">
    <property type="entry name" value="Ribosomal_uL23/eL15/eS24_sf"/>
</dbReference>
<dbReference type="NCBIfam" id="NF004363">
    <property type="entry name" value="PRK05738.2-4"/>
    <property type="match status" value="1"/>
</dbReference>
<dbReference type="PANTHER" id="PTHR11620">
    <property type="entry name" value="60S RIBOSOMAL PROTEIN L23A"/>
    <property type="match status" value="1"/>
</dbReference>
<dbReference type="Pfam" id="PF00276">
    <property type="entry name" value="Ribosomal_L23"/>
    <property type="match status" value="1"/>
</dbReference>
<dbReference type="SUPFAM" id="SSF54189">
    <property type="entry name" value="Ribosomal proteins S24e, L23 and L15e"/>
    <property type="match status" value="1"/>
</dbReference>
<organism>
    <name type="scientific">Chlorobium chlorochromatii (strain CaD3)</name>
    <dbReference type="NCBI Taxonomy" id="340177"/>
    <lineage>
        <taxon>Bacteria</taxon>
        <taxon>Pseudomonadati</taxon>
        <taxon>Chlorobiota</taxon>
        <taxon>Chlorobiia</taxon>
        <taxon>Chlorobiales</taxon>
        <taxon>Chlorobiaceae</taxon>
        <taxon>Chlorobium/Pelodictyon group</taxon>
        <taxon>Chlorobium</taxon>
    </lineage>
</organism>
<name>RL23_CHLCH</name>
<gene>
    <name evidence="1" type="primary">rplW</name>
    <name type="ordered locus">Cag_1849</name>
</gene>
<keyword id="KW-0687">Ribonucleoprotein</keyword>
<keyword id="KW-0689">Ribosomal protein</keyword>
<keyword id="KW-0694">RNA-binding</keyword>
<keyword id="KW-0699">rRNA-binding</keyword>
<evidence type="ECO:0000255" key="1">
    <source>
        <dbReference type="HAMAP-Rule" id="MF_01369"/>
    </source>
</evidence>
<evidence type="ECO:0000305" key="2"/>
<protein>
    <recommendedName>
        <fullName evidence="1">Large ribosomal subunit protein uL23</fullName>
    </recommendedName>
    <alternativeName>
        <fullName evidence="2">50S ribosomal protein L23</fullName>
    </alternativeName>
</protein>
<reference key="1">
    <citation type="submission" date="2005-08" db="EMBL/GenBank/DDBJ databases">
        <title>Complete sequence of Chlorobium chlorochromatii CaD3.</title>
        <authorList>
            <consortium name="US DOE Joint Genome Institute"/>
            <person name="Copeland A."/>
            <person name="Lucas S."/>
            <person name="Lapidus A."/>
            <person name="Barry K."/>
            <person name="Detter J.C."/>
            <person name="Glavina T."/>
            <person name="Hammon N."/>
            <person name="Israni S."/>
            <person name="Pitluck S."/>
            <person name="Bryant D."/>
            <person name="Schmutz J."/>
            <person name="Larimer F."/>
            <person name="Land M."/>
            <person name="Kyrpides N."/>
            <person name="Ivanova N."/>
            <person name="Richardson P."/>
        </authorList>
    </citation>
    <scope>NUCLEOTIDE SEQUENCE [LARGE SCALE GENOMIC DNA]</scope>
    <source>
        <strain>CaD3</strain>
    </source>
</reference>
<comment type="function">
    <text evidence="1">One of the early assembly proteins it binds 23S rRNA. One of the proteins that surrounds the polypeptide exit tunnel on the outside of the ribosome. Forms the main docking site for trigger factor binding to the ribosome.</text>
</comment>
<comment type="subunit">
    <text evidence="1">Part of the 50S ribosomal subunit. Contacts protein L29, and trigger factor when it is bound to the ribosome.</text>
</comment>
<comment type="similarity">
    <text evidence="1">Belongs to the universal ribosomal protein uL23 family.</text>
</comment>
<feature type="chain" id="PRO_0000272728" description="Large ribosomal subunit protein uL23">
    <location>
        <begin position="1"/>
        <end position="103"/>
    </location>
</feature>
<proteinExistence type="inferred from homology"/>
<accession>Q3APH5</accession>
<sequence>MANPLLCPLLTEKSTGLTEKKGQYVLVVRPDADKLTIKDAIEKKFGVSVTSVRTINYLGKLRAQNTRRGRIIGKKSDWKKAIVTLAEGQSIDYYSGTAQKSEG</sequence>